<comment type="function">
    <text evidence="1">Negatively regulates transcription of bacterial ribonucleotide reductase nrd genes and operons by binding to NrdR-boxes.</text>
</comment>
<comment type="cofactor">
    <cofactor evidence="1">
        <name>Zn(2+)</name>
        <dbReference type="ChEBI" id="CHEBI:29105"/>
    </cofactor>
    <text evidence="1">Binds 1 zinc ion.</text>
</comment>
<comment type="similarity">
    <text evidence="1">Belongs to the NrdR family.</text>
</comment>
<sequence length="153" mass="18024">MRCPSCSHNGTRVLDSRPVDEGRSIRRRRECESCLSRFTTFERVEESPLIVVKKEGTREEFNKEKILRGLIKACEKRPVSLRQLEEVTQSVERELRNLGISEVKSDMIGEIVMEELRDIDDVAYVRFASVYRQFKDLNVFIEELKDILQKERE</sequence>
<name>NRDR_BACC0</name>
<gene>
    <name evidence="1" type="primary">nrdR</name>
    <name type="ordered locus">BCAH820_4695</name>
</gene>
<feature type="chain" id="PRO_1000124466" description="Transcriptional repressor NrdR">
    <location>
        <begin position="1"/>
        <end position="153"/>
    </location>
</feature>
<feature type="domain" description="ATP-cone" evidence="1">
    <location>
        <begin position="49"/>
        <end position="139"/>
    </location>
</feature>
<feature type="zinc finger region" evidence="1">
    <location>
        <begin position="3"/>
        <end position="34"/>
    </location>
</feature>
<reference key="1">
    <citation type="submission" date="2008-10" db="EMBL/GenBank/DDBJ databases">
        <title>Genome sequence of Bacillus cereus AH820.</title>
        <authorList>
            <person name="Dodson R.J."/>
            <person name="Durkin A.S."/>
            <person name="Rosovitz M.J."/>
            <person name="Rasko D.A."/>
            <person name="Hoffmaster A."/>
            <person name="Ravel J."/>
            <person name="Sutton G."/>
        </authorList>
    </citation>
    <scope>NUCLEOTIDE SEQUENCE [LARGE SCALE GENOMIC DNA]</scope>
    <source>
        <strain>AH820</strain>
    </source>
</reference>
<proteinExistence type="inferred from homology"/>
<evidence type="ECO:0000255" key="1">
    <source>
        <dbReference type="HAMAP-Rule" id="MF_00440"/>
    </source>
</evidence>
<accession>B7JR87</accession>
<protein>
    <recommendedName>
        <fullName evidence="1">Transcriptional repressor NrdR</fullName>
    </recommendedName>
</protein>
<organism>
    <name type="scientific">Bacillus cereus (strain AH820)</name>
    <dbReference type="NCBI Taxonomy" id="405535"/>
    <lineage>
        <taxon>Bacteria</taxon>
        <taxon>Bacillati</taxon>
        <taxon>Bacillota</taxon>
        <taxon>Bacilli</taxon>
        <taxon>Bacillales</taxon>
        <taxon>Bacillaceae</taxon>
        <taxon>Bacillus</taxon>
        <taxon>Bacillus cereus group</taxon>
    </lineage>
</organism>
<keyword id="KW-0067">ATP-binding</keyword>
<keyword id="KW-0238">DNA-binding</keyword>
<keyword id="KW-0479">Metal-binding</keyword>
<keyword id="KW-0547">Nucleotide-binding</keyword>
<keyword id="KW-0678">Repressor</keyword>
<keyword id="KW-0804">Transcription</keyword>
<keyword id="KW-0805">Transcription regulation</keyword>
<keyword id="KW-0862">Zinc</keyword>
<keyword id="KW-0863">Zinc-finger</keyword>
<dbReference type="EMBL" id="CP001283">
    <property type="protein sequence ID" value="ACK91955.1"/>
    <property type="molecule type" value="Genomic_DNA"/>
</dbReference>
<dbReference type="RefSeq" id="WP_001203687.1">
    <property type="nucleotide sequence ID" value="NC_011773.1"/>
</dbReference>
<dbReference type="SMR" id="B7JR87"/>
<dbReference type="GeneID" id="93006530"/>
<dbReference type="KEGG" id="bcu:BCAH820_4695"/>
<dbReference type="HOGENOM" id="CLU_108412_0_0_9"/>
<dbReference type="Proteomes" id="UP000001363">
    <property type="component" value="Chromosome"/>
</dbReference>
<dbReference type="GO" id="GO:0005524">
    <property type="term" value="F:ATP binding"/>
    <property type="evidence" value="ECO:0007669"/>
    <property type="project" value="UniProtKB-KW"/>
</dbReference>
<dbReference type="GO" id="GO:0003677">
    <property type="term" value="F:DNA binding"/>
    <property type="evidence" value="ECO:0007669"/>
    <property type="project" value="UniProtKB-KW"/>
</dbReference>
<dbReference type="GO" id="GO:0008270">
    <property type="term" value="F:zinc ion binding"/>
    <property type="evidence" value="ECO:0007669"/>
    <property type="project" value="UniProtKB-UniRule"/>
</dbReference>
<dbReference type="GO" id="GO:0045892">
    <property type="term" value="P:negative regulation of DNA-templated transcription"/>
    <property type="evidence" value="ECO:0007669"/>
    <property type="project" value="UniProtKB-UniRule"/>
</dbReference>
<dbReference type="HAMAP" id="MF_00440">
    <property type="entry name" value="NrdR"/>
    <property type="match status" value="1"/>
</dbReference>
<dbReference type="InterPro" id="IPR005144">
    <property type="entry name" value="ATP-cone_dom"/>
</dbReference>
<dbReference type="InterPro" id="IPR055173">
    <property type="entry name" value="NrdR-like_N"/>
</dbReference>
<dbReference type="InterPro" id="IPR003796">
    <property type="entry name" value="RNR_NrdR-like"/>
</dbReference>
<dbReference type="NCBIfam" id="TIGR00244">
    <property type="entry name" value="transcriptional regulator NrdR"/>
    <property type="match status" value="1"/>
</dbReference>
<dbReference type="PANTHER" id="PTHR30455">
    <property type="entry name" value="TRANSCRIPTIONAL REPRESSOR NRDR"/>
    <property type="match status" value="1"/>
</dbReference>
<dbReference type="PANTHER" id="PTHR30455:SF2">
    <property type="entry name" value="TRANSCRIPTIONAL REPRESSOR NRDR"/>
    <property type="match status" value="1"/>
</dbReference>
<dbReference type="Pfam" id="PF03477">
    <property type="entry name" value="ATP-cone"/>
    <property type="match status" value="1"/>
</dbReference>
<dbReference type="Pfam" id="PF22811">
    <property type="entry name" value="Zn_ribbon_NrdR"/>
    <property type="match status" value="1"/>
</dbReference>
<dbReference type="PROSITE" id="PS51161">
    <property type="entry name" value="ATP_CONE"/>
    <property type="match status" value="1"/>
</dbReference>